<protein>
    <recommendedName>
        <fullName evidence="1">Gamma-glutamyl phosphate reductase</fullName>
        <shortName evidence="1">GPR</shortName>
        <ecNumber evidence="1">1.2.1.41</ecNumber>
    </recommendedName>
    <alternativeName>
        <fullName evidence="1">Glutamate-5-semialdehyde dehydrogenase</fullName>
    </alternativeName>
    <alternativeName>
        <fullName evidence="1">Glutamyl-gamma-semialdehyde dehydrogenase</fullName>
        <shortName evidence="1">GSA dehydrogenase</shortName>
    </alternativeName>
</protein>
<gene>
    <name evidence="1" type="primary">proA</name>
    <name type="ordered locus">Ppro_3508</name>
</gene>
<name>PROA_PELPD</name>
<proteinExistence type="inferred from homology"/>
<organism>
    <name type="scientific">Pelobacter propionicus (strain DSM 2379 / NBRC 103807 / OttBd1)</name>
    <dbReference type="NCBI Taxonomy" id="338966"/>
    <lineage>
        <taxon>Bacteria</taxon>
        <taxon>Pseudomonadati</taxon>
        <taxon>Thermodesulfobacteriota</taxon>
        <taxon>Desulfuromonadia</taxon>
        <taxon>Desulfuromonadales</taxon>
        <taxon>Desulfuromonadaceae</taxon>
        <taxon>Pelobacter</taxon>
    </lineage>
</organism>
<evidence type="ECO:0000255" key="1">
    <source>
        <dbReference type="HAMAP-Rule" id="MF_00412"/>
    </source>
</evidence>
<feature type="chain" id="PRO_1000049974" description="Gamma-glutamyl phosphate reductase">
    <location>
        <begin position="1"/>
        <end position="418"/>
    </location>
</feature>
<reference key="1">
    <citation type="submission" date="2006-10" db="EMBL/GenBank/DDBJ databases">
        <title>Complete sequence of chromosome of Pelobacter propionicus DSM 2379.</title>
        <authorList>
            <consortium name="US DOE Joint Genome Institute"/>
            <person name="Copeland A."/>
            <person name="Lucas S."/>
            <person name="Lapidus A."/>
            <person name="Barry K."/>
            <person name="Detter J.C."/>
            <person name="Glavina del Rio T."/>
            <person name="Hammon N."/>
            <person name="Israni S."/>
            <person name="Dalin E."/>
            <person name="Tice H."/>
            <person name="Pitluck S."/>
            <person name="Saunders E."/>
            <person name="Brettin T."/>
            <person name="Bruce D."/>
            <person name="Han C."/>
            <person name="Tapia R."/>
            <person name="Schmutz J."/>
            <person name="Larimer F."/>
            <person name="Land M."/>
            <person name="Hauser L."/>
            <person name="Kyrpides N."/>
            <person name="Kim E."/>
            <person name="Lovley D."/>
            <person name="Richardson P."/>
        </authorList>
    </citation>
    <scope>NUCLEOTIDE SEQUENCE [LARGE SCALE GENOMIC DNA]</scope>
    <source>
        <strain>DSM 2379 / NBRC 103807 / OttBd1</strain>
    </source>
</reference>
<dbReference type="EC" id="1.2.1.41" evidence="1"/>
<dbReference type="EMBL" id="CP000482">
    <property type="protein sequence ID" value="ABL01101.1"/>
    <property type="molecule type" value="Genomic_DNA"/>
</dbReference>
<dbReference type="RefSeq" id="WP_011737315.1">
    <property type="nucleotide sequence ID" value="NC_008609.1"/>
</dbReference>
<dbReference type="SMR" id="A1AUT0"/>
<dbReference type="STRING" id="338966.Ppro_3508"/>
<dbReference type="KEGG" id="ppd:Ppro_3508"/>
<dbReference type="eggNOG" id="COG0014">
    <property type="taxonomic scope" value="Bacteria"/>
</dbReference>
<dbReference type="HOGENOM" id="CLU_030231_0_0_7"/>
<dbReference type="OrthoDB" id="9809970at2"/>
<dbReference type="UniPathway" id="UPA00098">
    <property type="reaction ID" value="UER00360"/>
</dbReference>
<dbReference type="Proteomes" id="UP000006732">
    <property type="component" value="Chromosome"/>
</dbReference>
<dbReference type="GO" id="GO:0005737">
    <property type="term" value="C:cytoplasm"/>
    <property type="evidence" value="ECO:0007669"/>
    <property type="project" value="UniProtKB-SubCell"/>
</dbReference>
<dbReference type="GO" id="GO:0004350">
    <property type="term" value="F:glutamate-5-semialdehyde dehydrogenase activity"/>
    <property type="evidence" value="ECO:0007669"/>
    <property type="project" value="UniProtKB-UniRule"/>
</dbReference>
<dbReference type="GO" id="GO:0050661">
    <property type="term" value="F:NADP binding"/>
    <property type="evidence" value="ECO:0007669"/>
    <property type="project" value="InterPro"/>
</dbReference>
<dbReference type="GO" id="GO:0055129">
    <property type="term" value="P:L-proline biosynthetic process"/>
    <property type="evidence" value="ECO:0007669"/>
    <property type="project" value="UniProtKB-UniRule"/>
</dbReference>
<dbReference type="CDD" id="cd07079">
    <property type="entry name" value="ALDH_F18-19_ProA-GPR"/>
    <property type="match status" value="1"/>
</dbReference>
<dbReference type="FunFam" id="3.40.309.10:FF:000006">
    <property type="entry name" value="Gamma-glutamyl phosphate reductase"/>
    <property type="match status" value="1"/>
</dbReference>
<dbReference type="Gene3D" id="3.40.605.10">
    <property type="entry name" value="Aldehyde Dehydrogenase, Chain A, domain 1"/>
    <property type="match status" value="1"/>
</dbReference>
<dbReference type="Gene3D" id="3.40.309.10">
    <property type="entry name" value="Aldehyde Dehydrogenase, Chain A, domain 2"/>
    <property type="match status" value="1"/>
</dbReference>
<dbReference type="HAMAP" id="MF_00412">
    <property type="entry name" value="ProA"/>
    <property type="match status" value="1"/>
</dbReference>
<dbReference type="InterPro" id="IPR016161">
    <property type="entry name" value="Ald_DH/histidinol_DH"/>
</dbReference>
<dbReference type="InterPro" id="IPR016163">
    <property type="entry name" value="Ald_DH_C"/>
</dbReference>
<dbReference type="InterPro" id="IPR016162">
    <property type="entry name" value="Ald_DH_N"/>
</dbReference>
<dbReference type="InterPro" id="IPR015590">
    <property type="entry name" value="Aldehyde_DH_dom"/>
</dbReference>
<dbReference type="InterPro" id="IPR020593">
    <property type="entry name" value="G-glutamylP_reductase_CS"/>
</dbReference>
<dbReference type="InterPro" id="IPR012134">
    <property type="entry name" value="Glu-5-SA_DH"/>
</dbReference>
<dbReference type="InterPro" id="IPR000965">
    <property type="entry name" value="GPR_dom"/>
</dbReference>
<dbReference type="NCBIfam" id="NF001221">
    <property type="entry name" value="PRK00197.1"/>
    <property type="match status" value="1"/>
</dbReference>
<dbReference type="NCBIfam" id="TIGR00407">
    <property type="entry name" value="proA"/>
    <property type="match status" value="1"/>
</dbReference>
<dbReference type="PANTHER" id="PTHR11063:SF8">
    <property type="entry name" value="DELTA-1-PYRROLINE-5-CARBOXYLATE SYNTHASE"/>
    <property type="match status" value="1"/>
</dbReference>
<dbReference type="PANTHER" id="PTHR11063">
    <property type="entry name" value="GLUTAMATE SEMIALDEHYDE DEHYDROGENASE"/>
    <property type="match status" value="1"/>
</dbReference>
<dbReference type="Pfam" id="PF00171">
    <property type="entry name" value="Aldedh"/>
    <property type="match status" value="1"/>
</dbReference>
<dbReference type="PIRSF" id="PIRSF000151">
    <property type="entry name" value="GPR"/>
    <property type="match status" value="1"/>
</dbReference>
<dbReference type="SUPFAM" id="SSF53720">
    <property type="entry name" value="ALDH-like"/>
    <property type="match status" value="1"/>
</dbReference>
<dbReference type="PROSITE" id="PS01223">
    <property type="entry name" value="PROA"/>
    <property type="match status" value="1"/>
</dbReference>
<comment type="function">
    <text evidence="1">Catalyzes the NADPH-dependent reduction of L-glutamate 5-phosphate into L-glutamate 5-semialdehyde and phosphate. The product spontaneously undergoes cyclization to form 1-pyrroline-5-carboxylate.</text>
</comment>
<comment type="catalytic activity">
    <reaction evidence="1">
        <text>L-glutamate 5-semialdehyde + phosphate + NADP(+) = L-glutamyl 5-phosphate + NADPH + H(+)</text>
        <dbReference type="Rhea" id="RHEA:19541"/>
        <dbReference type="ChEBI" id="CHEBI:15378"/>
        <dbReference type="ChEBI" id="CHEBI:43474"/>
        <dbReference type="ChEBI" id="CHEBI:57783"/>
        <dbReference type="ChEBI" id="CHEBI:58066"/>
        <dbReference type="ChEBI" id="CHEBI:58274"/>
        <dbReference type="ChEBI" id="CHEBI:58349"/>
        <dbReference type="EC" id="1.2.1.41"/>
    </reaction>
</comment>
<comment type="pathway">
    <text evidence="1">Amino-acid biosynthesis; L-proline biosynthesis; L-glutamate 5-semialdehyde from L-glutamate: step 2/2.</text>
</comment>
<comment type="subcellular location">
    <subcellularLocation>
        <location evidence="1">Cytoplasm</location>
    </subcellularLocation>
</comment>
<comment type="similarity">
    <text evidence="1">Belongs to the gamma-glutamyl phosphate reductase family.</text>
</comment>
<keyword id="KW-0028">Amino-acid biosynthesis</keyword>
<keyword id="KW-0963">Cytoplasm</keyword>
<keyword id="KW-0521">NADP</keyword>
<keyword id="KW-0560">Oxidoreductase</keyword>
<keyword id="KW-0641">Proline biosynthesis</keyword>
<keyword id="KW-1185">Reference proteome</keyword>
<sequence length="418" mass="45618">MTIAEQVAQIAHEARQASFVLSRLSTRVKNELLLAMAEALEQQAPHLIAENAKDLEEGKQKGLSSAMLDRLMLDAKRISAMADALREVAALPDPVGEVTKMWKRPNNLMVGKMRIPLGVIGIIFEARPNVTADAAALCLKAGNAVILRGGKEAINSNRAIAAILREAMVSKGVPAGALALIPFTDRQGVLEMLKQEECIDLIIPRGGEGLIRFVTENSRIPVIKHYKGVCHIFVDESADFDMAERIIINAKTQRPGVCNALETLLIHESVAAAFIPRIASILGGMQVELRGDERFRALAPQAKPASEEDWYAEYLELILACRVVDDLDQAIDHINRYGSLHTESIITSDYGRAQRFIREVNSSCVVVNASTRFADGNQLGLGAEIGISTTKLHSFGPMGLEDLTTTKFIVYGDGQVRE</sequence>
<accession>A1AUT0</accession>